<comment type="function">
    <text evidence="1 3">The master regulator for adhesive curli fimbriae expression; necessary for transcription of the csgAB operon (By similarity). Plays a positive role in biofilm formation (PubMed:26880544).</text>
</comment>
<sequence length="216" mass="24846">MFNEVHSSHGHTLLLITKPSLQATALLQHLKQSLAITGKLHNIQRSLEDISAGCIVLMDMMEADKKLIHYWQDNLSRKNNNIKTLLLNTPDDYPYREIENWPHINGVFYATEDQEHVVSGLQGILRGECYFSQKLASYLITHSGNYRYNSTESALLTHREKEILNKLRIGASNNEIARSLFISENTVKTHLYNLFKKIAVKNRTQAVSWANDNLRR</sequence>
<reference key="1">
    <citation type="journal article" date="1998" name="J. Bacteriol.">
        <title>Curli fibers are highly conserved between Salmonella typhimurium and Escherichia coli with respect to operon structure and regulation.</title>
        <authorList>
            <person name="Romling U."/>
            <person name="Bian Z."/>
            <person name="Hammar M."/>
            <person name="Sierralta W.D."/>
            <person name="Normark S."/>
        </authorList>
    </citation>
    <scope>NUCLEOTIDE SEQUENCE [GENOMIC DNA]</scope>
    <source>
        <strain>SR-11</strain>
    </source>
</reference>
<reference key="2">
    <citation type="journal article" date="2001" name="Nature">
        <title>Complete genome sequence of Salmonella enterica serovar Typhimurium LT2.</title>
        <authorList>
            <person name="McClelland M."/>
            <person name="Sanderson K.E."/>
            <person name="Spieth J."/>
            <person name="Clifton S.W."/>
            <person name="Latreille P."/>
            <person name="Courtney L."/>
            <person name="Porwollik S."/>
            <person name="Ali J."/>
            <person name="Dante M."/>
            <person name="Du F."/>
            <person name="Hou S."/>
            <person name="Layman D."/>
            <person name="Leonard S."/>
            <person name="Nguyen C."/>
            <person name="Scott K."/>
            <person name="Holmes A."/>
            <person name="Grewal N."/>
            <person name="Mulvaney E."/>
            <person name="Ryan E."/>
            <person name="Sun H."/>
            <person name="Florea L."/>
            <person name="Miller W."/>
            <person name="Stoneking T."/>
            <person name="Nhan M."/>
            <person name="Waterston R."/>
            <person name="Wilson R.K."/>
        </authorList>
    </citation>
    <scope>NUCLEOTIDE SEQUENCE [LARGE SCALE GENOMIC DNA]</scope>
    <source>
        <strain>LT2 / SGSC1412 / ATCC 700720</strain>
    </source>
</reference>
<reference key="3">
    <citation type="journal article" date="2016" name="Elife">
        <title>The horizontally-acquired response regulator SsrB drives a Salmonella lifestyle switch by relieving biofilm silencing.</title>
        <authorList>
            <person name="Desai S.K."/>
            <person name="Winardhi R.S."/>
            <person name="Periasamy S."/>
            <person name="Dykas M.M."/>
            <person name="Jie Y."/>
            <person name="Kenney L.J."/>
        </authorList>
    </citation>
    <scope>FUNCTION</scope>
    <source>
        <strain evidence="4">14028s / SGSC 2262</strain>
    </source>
</reference>
<keyword id="KW-0002">3D-structure</keyword>
<keyword id="KW-0238">DNA-binding</keyword>
<keyword id="KW-1185">Reference proteome</keyword>
<keyword id="KW-0804">Transcription</keyword>
<keyword id="KW-0805">Transcription regulation</keyword>
<evidence type="ECO:0000250" key="1">
    <source>
        <dbReference type="UniProtKB" id="P52106"/>
    </source>
</evidence>
<evidence type="ECO:0000255" key="2">
    <source>
        <dbReference type="PROSITE-ProRule" id="PRU00411"/>
    </source>
</evidence>
<evidence type="ECO:0000269" key="3">
    <source>
    </source>
</evidence>
<evidence type="ECO:0000303" key="4">
    <source>
    </source>
</evidence>
<evidence type="ECO:0007829" key="5">
    <source>
        <dbReference type="PDB" id="5XP0"/>
    </source>
</evidence>
<feature type="chain" id="PRO_0000184144" description="Probable csgAB operon transcriptional regulatory protein">
    <location>
        <begin position="1"/>
        <end position="216"/>
    </location>
</feature>
<feature type="domain" description="HTH luxR-type" evidence="2">
    <location>
        <begin position="149"/>
        <end position="214"/>
    </location>
</feature>
<feature type="DNA-binding region" description="H-T-H motif" evidence="2">
    <location>
        <begin position="173"/>
        <end position="192"/>
    </location>
</feature>
<feature type="strand" evidence="5">
    <location>
        <begin position="8"/>
        <end position="10"/>
    </location>
</feature>
<feature type="strand" evidence="5">
    <location>
        <begin position="12"/>
        <end position="17"/>
    </location>
</feature>
<feature type="helix" evidence="5">
    <location>
        <begin position="21"/>
        <end position="34"/>
    </location>
</feature>
<feature type="strand" evidence="5">
    <location>
        <begin position="37"/>
        <end position="42"/>
    </location>
</feature>
<feature type="strand" evidence="5">
    <location>
        <begin position="54"/>
        <end position="59"/>
    </location>
</feature>
<feature type="helix" evidence="5">
    <location>
        <begin position="60"/>
        <end position="62"/>
    </location>
</feature>
<feature type="helix" evidence="5">
    <location>
        <begin position="65"/>
        <end position="76"/>
    </location>
</feature>
<feature type="strand" evidence="5">
    <location>
        <begin position="83"/>
        <end position="88"/>
    </location>
</feature>
<feature type="strand" evidence="5">
    <location>
        <begin position="91"/>
        <end position="93"/>
    </location>
</feature>
<feature type="helix" evidence="5">
    <location>
        <begin position="95"/>
        <end position="99"/>
    </location>
</feature>
<feature type="strand" evidence="5">
    <location>
        <begin position="104"/>
        <end position="107"/>
    </location>
</feature>
<feature type="helix" evidence="5">
    <location>
        <begin position="114"/>
        <end position="125"/>
    </location>
</feature>
<feature type="helix" evidence="5">
    <location>
        <begin position="133"/>
        <end position="140"/>
    </location>
</feature>
<protein>
    <recommendedName>
        <fullName>Probable csgAB operon transcriptional regulatory protein</fullName>
    </recommendedName>
</protein>
<gene>
    <name evidence="4" type="primary">csgD</name>
    <name evidence="4" type="synonym">agfD</name>
    <name type="ordered locus">STM1142</name>
</gene>
<proteinExistence type="evidence at protein level"/>
<accession>O54294</accession>
<dbReference type="EMBL" id="AJ002301">
    <property type="protein sequence ID" value="CAA05315.1"/>
    <property type="molecule type" value="Genomic_DNA"/>
</dbReference>
<dbReference type="EMBL" id="AE006468">
    <property type="protein sequence ID" value="AAL20072.1"/>
    <property type="molecule type" value="Genomic_DNA"/>
</dbReference>
<dbReference type="RefSeq" id="NP_460113.1">
    <property type="nucleotide sequence ID" value="NC_003197.2"/>
</dbReference>
<dbReference type="RefSeq" id="WP_000481517.1">
    <property type="nucleotide sequence ID" value="NC_003197.2"/>
</dbReference>
<dbReference type="PDB" id="5XP0">
    <property type="method" value="X-ray"/>
    <property type="resolution" value="2.00 A"/>
    <property type="chains" value="A/B=2-148"/>
</dbReference>
<dbReference type="PDBsum" id="5XP0"/>
<dbReference type="SMR" id="O54294"/>
<dbReference type="STRING" id="99287.STM1142"/>
<dbReference type="PaxDb" id="99287-STM1142"/>
<dbReference type="GeneID" id="1252660"/>
<dbReference type="KEGG" id="stm:STM1142"/>
<dbReference type="PATRIC" id="fig|99287.12.peg.1209"/>
<dbReference type="HOGENOM" id="CLU_000445_90_7_6"/>
<dbReference type="OMA" id="PSYHELI"/>
<dbReference type="PhylomeDB" id="O54294"/>
<dbReference type="BioCyc" id="SENT99287:STM1142-MONOMER"/>
<dbReference type="Proteomes" id="UP000001014">
    <property type="component" value="Chromosome"/>
</dbReference>
<dbReference type="GO" id="GO:0003677">
    <property type="term" value="F:DNA binding"/>
    <property type="evidence" value="ECO:0007669"/>
    <property type="project" value="UniProtKB-KW"/>
</dbReference>
<dbReference type="GO" id="GO:0006355">
    <property type="term" value="P:regulation of DNA-templated transcription"/>
    <property type="evidence" value="ECO:0007669"/>
    <property type="project" value="InterPro"/>
</dbReference>
<dbReference type="CDD" id="cd06170">
    <property type="entry name" value="LuxR_C_like"/>
    <property type="match status" value="1"/>
</dbReference>
<dbReference type="FunFam" id="1.10.10.10:FF:000153">
    <property type="entry name" value="LuxR family transcriptional regulator"/>
    <property type="match status" value="1"/>
</dbReference>
<dbReference type="Gene3D" id="3.40.50.2300">
    <property type="match status" value="1"/>
</dbReference>
<dbReference type="Gene3D" id="1.10.10.10">
    <property type="entry name" value="Winged helix-like DNA-binding domain superfamily/Winged helix DNA-binding domain"/>
    <property type="match status" value="1"/>
</dbReference>
<dbReference type="InterPro" id="IPR049151">
    <property type="entry name" value="CsgD-like_REC"/>
</dbReference>
<dbReference type="InterPro" id="IPR016032">
    <property type="entry name" value="Sig_transdc_resp-reg_C-effctor"/>
</dbReference>
<dbReference type="InterPro" id="IPR000792">
    <property type="entry name" value="Tscrpt_reg_LuxR_C"/>
</dbReference>
<dbReference type="InterPro" id="IPR036388">
    <property type="entry name" value="WH-like_DNA-bd_sf"/>
</dbReference>
<dbReference type="NCBIfam" id="NF007505">
    <property type="entry name" value="PRK10100.1"/>
    <property type="match status" value="1"/>
</dbReference>
<dbReference type="PANTHER" id="PTHR44688">
    <property type="entry name" value="DNA-BINDING TRANSCRIPTIONAL ACTIVATOR DEVR_DOSR"/>
    <property type="match status" value="1"/>
</dbReference>
<dbReference type="PANTHER" id="PTHR44688:SF16">
    <property type="entry name" value="DNA-BINDING TRANSCRIPTIONAL ACTIVATOR DEVR_DOSR"/>
    <property type="match status" value="1"/>
</dbReference>
<dbReference type="Pfam" id="PF00196">
    <property type="entry name" value="GerE"/>
    <property type="match status" value="1"/>
</dbReference>
<dbReference type="Pfam" id="PF21155">
    <property type="entry name" value="VpsT-like_REC"/>
    <property type="match status" value="1"/>
</dbReference>
<dbReference type="PRINTS" id="PR00038">
    <property type="entry name" value="HTHLUXR"/>
</dbReference>
<dbReference type="SMART" id="SM00421">
    <property type="entry name" value="HTH_LUXR"/>
    <property type="match status" value="1"/>
</dbReference>
<dbReference type="SUPFAM" id="SSF46894">
    <property type="entry name" value="C-terminal effector domain of the bipartite response regulators"/>
    <property type="match status" value="1"/>
</dbReference>
<dbReference type="PROSITE" id="PS00622">
    <property type="entry name" value="HTH_LUXR_1"/>
    <property type="match status" value="1"/>
</dbReference>
<dbReference type="PROSITE" id="PS50043">
    <property type="entry name" value="HTH_LUXR_2"/>
    <property type="match status" value="1"/>
</dbReference>
<organism>
    <name type="scientific">Salmonella typhimurium (strain LT2 / SGSC1412 / ATCC 700720)</name>
    <dbReference type="NCBI Taxonomy" id="99287"/>
    <lineage>
        <taxon>Bacteria</taxon>
        <taxon>Pseudomonadati</taxon>
        <taxon>Pseudomonadota</taxon>
        <taxon>Gammaproteobacteria</taxon>
        <taxon>Enterobacterales</taxon>
        <taxon>Enterobacteriaceae</taxon>
        <taxon>Salmonella</taxon>
    </lineage>
</organism>
<name>CSGD_SALTY</name>